<reference key="1">
    <citation type="journal article" date="2008" name="J. Bacteriol.">
        <title>The pangenome structure of Escherichia coli: comparative genomic analysis of E. coli commensal and pathogenic isolates.</title>
        <authorList>
            <person name="Rasko D.A."/>
            <person name="Rosovitz M.J."/>
            <person name="Myers G.S.A."/>
            <person name="Mongodin E.F."/>
            <person name="Fricke W.F."/>
            <person name="Gajer P."/>
            <person name="Crabtree J."/>
            <person name="Sebaihia M."/>
            <person name="Thomson N.R."/>
            <person name="Chaudhuri R."/>
            <person name="Henderson I.R."/>
            <person name="Sperandio V."/>
            <person name="Ravel J."/>
        </authorList>
    </citation>
    <scope>NUCLEOTIDE SEQUENCE [LARGE SCALE GENOMIC DNA]</scope>
    <source>
        <strain>HS</strain>
    </source>
</reference>
<keyword id="KW-0479">Metal-binding</keyword>
<keyword id="KW-0500">Molybdenum</keyword>
<keyword id="KW-0560">Oxidoreductase</keyword>
<keyword id="KW-0574">Periplasm</keyword>
<keyword id="KW-0732">Signal</keyword>
<gene>
    <name evidence="1" type="primary">msrP</name>
    <name type="ordered locus">EcHS_A2072</name>
</gene>
<name>MSRP_ECOHS</name>
<proteinExistence type="inferred from homology"/>
<evidence type="ECO:0000255" key="1">
    <source>
        <dbReference type="HAMAP-Rule" id="MF_01206"/>
    </source>
</evidence>
<sequence length="334" mass="37427">MKKNQFLKESDVTAESVFFMKRRQVLKALGISAAALSLPHAAHADLLSWFKGNDRPLAPAGKPLEFSKPAAWQNNLPLTPVDKVSGYNNFYEFGLDKADPAANAGSLKTDPWTLKISGEVAKPLTLDHDDLTRRFPLEERIYRMRCVEAWSMVVPWIGFPLHKLLALAEPTSNAKYVAFETIYAPEQMPGQQDRFIGGGLKYPYVEGLRLDEAMHPLTLMTVGVYGKALPPQNGAPVRLIVPWKYGFKGIKSIVSIKLTRERPPTTWNLAAPDEYGFYANVNPHVDHPRWSQATERFIGSGGILDVQRQPTLLFNGYADQVASLYRGLDLRENF</sequence>
<organism>
    <name type="scientific">Escherichia coli O9:H4 (strain HS)</name>
    <dbReference type="NCBI Taxonomy" id="331112"/>
    <lineage>
        <taxon>Bacteria</taxon>
        <taxon>Pseudomonadati</taxon>
        <taxon>Pseudomonadota</taxon>
        <taxon>Gammaproteobacteria</taxon>
        <taxon>Enterobacterales</taxon>
        <taxon>Enterobacteriaceae</taxon>
        <taxon>Escherichia</taxon>
    </lineage>
</organism>
<protein>
    <recommendedName>
        <fullName evidence="1">Protein-methionine-sulfoxide reductase catalytic subunit MsrP</fullName>
        <ecNumber evidence="1">1.8.5.-</ecNumber>
    </recommendedName>
</protein>
<dbReference type="EC" id="1.8.5.-" evidence="1"/>
<dbReference type="EMBL" id="CP000802">
    <property type="protein sequence ID" value="ABV06374.1"/>
    <property type="molecule type" value="Genomic_DNA"/>
</dbReference>
<dbReference type="RefSeq" id="WP_000740075.1">
    <property type="nucleotide sequence ID" value="NC_009800.1"/>
</dbReference>
<dbReference type="SMR" id="A8A1H0"/>
<dbReference type="KEGG" id="ecx:EcHS_A2072"/>
<dbReference type="HOGENOM" id="CLU_045520_0_0_6"/>
<dbReference type="GO" id="GO:0042597">
    <property type="term" value="C:periplasmic space"/>
    <property type="evidence" value="ECO:0007669"/>
    <property type="project" value="UniProtKB-SubCell"/>
</dbReference>
<dbReference type="GO" id="GO:0046872">
    <property type="term" value="F:metal ion binding"/>
    <property type="evidence" value="ECO:0007669"/>
    <property type="project" value="UniProtKB-KW"/>
</dbReference>
<dbReference type="GO" id="GO:0043546">
    <property type="term" value="F:molybdopterin cofactor binding"/>
    <property type="evidence" value="ECO:0007669"/>
    <property type="project" value="UniProtKB-UniRule"/>
</dbReference>
<dbReference type="GO" id="GO:0016672">
    <property type="term" value="F:oxidoreductase activity, acting on a sulfur group of donors, quinone or similar compound as acceptor"/>
    <property type="evidence" value="ECO:0007669"/>
    <property type="project" value="UniProtKB-UniRule"/>
</dbReference>
<dbReference type="GO" id="GO:0030091">
    <property type="term" value="P:protein repair"/>
    <property type="evidence" value="ECO:0007669"/>
    <property type="project" value="UniProtKB-UniRule"/>
</dbReference>
<dbReference type="CDD" id="cd02107">
    <property type="entry name" value="YedY_like_Moco"/>
    <property type="match status" value="1"/>
</dbReference>
<dbReference type="FunFam" id="3.90.420.10:FF:000001">
    <property type="entry name" value="Protein-methionine-sulfoxide reductase catalytic subunit MsrP"/>
    <property type="match status" value="1"/>
</dbReference>
<dbReference type="Gene3D" id="3.90.420.10">
    <property type="entry name" value="Oxidoreductase, molybdopterin-binding domain"/>
    <property type="match status" value="1"/>
</dbReference>
<dbReference type="HAMAP" id="MF_01206">
    <property type="entry name" value="MsrP"/>
    <property type="match status" value="1"/>
</dbReference>
<dbReference type="InterPro" id="IPR022867">
    <property type="entry name" value="MsrP"/>
</dbReference>
<dbReference type="InterPro" id="IPR000572">
    <property type="entry name" value="OxRdtase_Mopterin-bd_dom"/>
</dbReference>
<dbReference type="InterPro" id="IPR036374">
    <property type="entry name" value="OxRdtase_Mopterin-bd_sf"/>
</dbReference>
<dbReference type="InterPro" id="IPR006311">
    <property type="entry name" value="TAT_signal"/>
</dbReference>
<dbReference type="NCBIfam" id="NF003767">
    <property type="entry name" value="PRK05363.1"/>
    <property type="match status" value="1"/>
</dbReference>
<dbReference type="PANTHER" id="PTHR43032">
    <property type="entry name" value="PROTEIN-METHIONINE-SULFOXIDE REDUCTASE"/>
    <property type="match status" value="1"/>
</dbReference>
<dbReference type="PANTHER" id="PTHR43032:SF3">
    <property type="entry name" value="PROTEIN-METHIONINE-SULFOXIDE REDUCTASE CATALYTIC SUBUNIT MSRP"/>
    <property type="match status" value="1"/>
</dbReference>
<dbReference type="Pfam" id="PF00174">
    <property type="entry name" value="Oxidored_molyb"/>
    <property type="match status" value="1"/>
</dbReference>
<dbReference type="SUPFAM" id="SSF56524">
    <property type="entry name" value="Oxidoreductase molybdopterin-binding domain"/>
    <property type="match status" value="1"/>
</dbReference>
<dbReference type="PROSITE" id="PS51318">
    <property type="entry name" value="TAT"/>
    <property type="match status" value="1"/>
</dbReference>
<accession>A8A1H0</accession>
<comment type="function">
    <text evidence="1">Part of the MsrPQ system that repairs oxidized periplasmic proteins containing methionine sulfoxide residues (Met-O), using respiratory chain electrons. Thus protects these proteins from oxidative-stress damage caused by reactive species of oxygen and chlorine generated by the host defense mechanisms. MsrPQ is essential for the maintenance of envelope integrity under bleach stress, rescuing a wide series of structurally unrelated periplasmic proteins from methionine oxidation, including the primary periplasmic chaperone SurA and the lipoprotein Pal. The catalytic subunit MsrP is non-stereospecific, being able to reduce both (R-) and (S-) diastereoisomers of methionine sulfoxide.</text>
</comment>
<comment type="catalytic activity">
    <reaction evidence="1">
        <text>L-methionyl-[protein] + a quinone + H2O = L-methionyl-(S)-S-oxide-[protein] + a quinol</text>
        <dbReference type="Rhea" id="RHEA:51292"/>
        <dbReference type="Rhea" id="RHEA-COMP:12313"/>
        <dbReference type="Rhea" id="RHEA-COMP:12315"/>
        <dbReference type="ChEBI" id="CHEBI:15377"/>
        <dbReference type="ChEBI" id="CHEBI:16044"/>
        <dbReference type="ChEBI" id="CHEBI:24646"/>
        <dbReference type="ChEBI" id="CHEBI:44120"/>
        <dbReference type="ChEBI" id="CHEBI:132124"/>
    </reaction>
</comment>
<comment type="catalytic activity">
    <reaction evidence="1">
        <text>L-methionyl-[protein] + a quinone + H2O = L-methionyl-(R)-S-oxide-[protein] + a quinol</text>
        <dbReference type="Rhea" id="RHEA:51296"/>
        <dbReference type="Rhea" id="RHEA-COMP:12313"/>
        <dbReference type="Rhea" id="RHEA-COMP:12314"/>
        <dbReference type="ChEBI" id="CHEBI:15377"/>
        <dbReference type="ChEBI" id="CHEBI:16044"/>
        <dbReference type="ChEBI" id="CHEBI:24646"/>
        <dbReference type="ChEBI" id="CHEBI:45764"/>
        <dbReference type="ChEBI" id="CHEBI:132124"/>
    </reaction>
</comment>
<comment type="cofactor">
    <cofactor evidence="1">
        <name>Mo-molybdopterin</name>
        <dbReference type="ChEBI" id="CHEBI:71302"/>
    </cofactor>
    <text evidence="1">Binds 1 Mo-molybdopterin (Mo-MPT) cofactor per subunit.</text>
</comment>
<comment type="subunit">
    <text evidence="1">Heterodimer of a catalytic subunit (MsrP) and a heme-binding subunit (MsrQ).</text>
</comment>
<comment type="subcellular location">
    <subcellularLocation>
        <location evidence="1">Periplasm</location>
    </subcellularLocation>
    <text evidence="1">Is attached to the inner membrane when interacting with the MsrQ subunit.</text>
</comment>
<comment type="PTM">
    <text evidence="1">Predicted to be exported by the Tat system. The position of the signal peptide cleavage has not been experimentally proven.</text>
</comment>
<comment type="similarity">
    <text evidence="1">Belongs to the MsrP family.</text>
</comment>
<feature type="signal peptide" description="Tat-type signal" evidence="1">
    <location>
        <begin position="1"/>
        <end position="44"/>
    </location>
</feature>
<feature type="chain" id="PRO_1000066156" description="Protein-methionine-sulfoxide reductase catalytic subunit MsrP" evidence="1">
    <location>
        <begin position="45"/>
        <end position="334"/>
    </location>
</feature>
<feature type="binding site" evidence="1">
    <location>
        <position position="88"/>
    </location>
    <ligand>
        <name>Mo-molybdopterin</name>
        <dbReference type="ChEBI" id="CHEBI:71302"/>
    </ligand>
</feature>
<feature type="binding site" evidence="1">
    <location>
        <begin position="91"/>
        <end position="92"/>
    </location>
    <ligand>
        <name>Mo-molybdopterin</name>
        <dbReference type="ChEBI" id="CHEBI:71302"/>
    </ligand>
</feature>
<feature type="binding site" evidence="1">
    <location>
        <position position="146"/>
    </location>
    <ligand>
        <name>Mo-molybdopterin</name>
        <dbReference type="ChEBI" id="CHEBI:71302"/>
    </ligand>
    <ligandPart>
        <name>Mo</name>
        <dbReference type="ChEBI" id="CHEBI:28685"/>
    </ligandPart>
</feature>
<feature type="binding site" evidence="1">
    <location>
        <position position="181"/>
    </location>
    <ligand>
        <name>Mo-molybdopterin</name>
        <dbReference type="ChEBI" id="CHEBI:71302"/>
    </ligand>
</feature>
<feature type="binding site" evidence="1">
    <location>
        <position position="233"/>
    </location>
    <ligand>
        <name>Mo-molybdopterin</name>
        <dbReference type="ChEBI" id="CHEBI:71302"/>
    </ligand>
</feature>
<feature type="binding site" evidence="1">
    <location>
        <position position="238"/>
    </location>
    <ligand>
        <name>Mo-molybdopterin</name>
        <dbReference type="ChEBI" id="CHEBI:71302"/>
    </ligand>
</feature>
<feature type="binding site" evidence="1">
    <location>
        <begin position="249"/>
        <end position="251"/>
    </location>
    <ligand>
        <name>Mo-molybdopterin</name>
        <dbReference type="ChEBI" id="CHEBI:71302"/>
    </ligand>
</feature>